<gene>
    <name type="primary">clfB</name>
    <name type="ordered locus">MW2551</name>
</gene>
<name>CLFB_STAAW</name>
<protein>
    <recommendedName>
        <fullName>Clumping factor B</fullName>
    </recommendedName>
    <alternativeName>
        <fullName>Fibrinogen receptor B</fullName>
    </alternativeName>
    <alternativeName>
        <fullName>Fibrinogen-binding protein B</fullName>
    </alternativeName>
</protein>
<feature type="signal peptide" evidence="1">
    <location>
        <begin position="1"/>
        <end position="44"/>
    </location>
</feature>
<feature type="chain" id="PRO_0000042016" description="Clumping factor B">
    <location>
        <begin position="45"/>
        <end position="871"/>
    </location>
</feature>
<feature type="propeptide" id="PRO_0000042017" description="Removed by sortase" evidence="3">
    <location>
        <begin position="872"/>
        <end position="907"/>
    </location>
</feature>
<feature type="region of interest" description="Disordered" evidence="4">
    <location>
        <begin position="44"/>
        <end position="191"/>
    </location>
</feature>
<feature type="region of interest" description="Ligand binding A region" evidence="1">
    <location>
        <begin position="45"/>
        <end position="542"/>
    </location>
</feature>
<feature type="region of interest" description="Disordered" evidence="4">
    <location>
        <begin position="530"/>
        <end position="879"/>
    </location>
</feature>
<feature type="short sequence motif" description="YSIRK-G/S signaling motif" evidence="2">
    <location>
        <begin position="15"/>
        <end position="26"/>
    </location>
</feature>
<feature type="short sequence motif" description="MIDAS-like motif">
    <location>
        <begin position="272"/>
        <end position="276"/>
    </location>
</feature>
<feature type="short sequence motif" description="LPXTG sorting signal" evidence="3">
    <location>
        <begin position="868"/>
        <end position="872"/>
    </location>
</feature>
<feature type="compositionally biased region" description="Polar residues" evidence="4">
    <location>
        <begin position="44"/>
        <end position="61"/>
    </location>
</feature>
<feature type="compositionally biased region" description="Polar residues" evidence="4">
    <location>
        <begin position="68"/>
        <end position="101"/>
    </location>
</feature>
<feature type="compositionally biased region" description="Low complexity" evidence="4">
    <location>
        <begin position="102"/>
        <end position="119"/>
    </location>
</feature>
<feature type="compositionally biased region" description="Polar residues" evidence="4">
    <location>
        <begin position="134"/>
        <end position="189"/>
    </location>
</feature>
<feature type="compositionally biased region" description="Pro residues" evidence="4">
    <location>
        <begin position="545"/>
        <end position="555"/>
    </location>
</feature>
<feature type="compositionally biased region" description="Acidic residues" evidence="4">
    <location>
        <begin position="556"/>
        <end position="831"/>
    </location>
</feature>
<feature type="compositionally biased region" description="Polar residues" evidence="4">
    <location>
        <begin position="835"/>
        <end position="846"/>
    </location>
</feature>
<feature type="compositionally biased region" description="Basic and acidic residues" evidence="4">
    <location>
        <begin position="863"/>
        <end position="876"/>
    </location>
</feature>
<feature type="site" description="Cleavage; by aureolysin" evidence="1">
    <location>
        <begin position="197"/>
        <end position="198"/>
    </location>
</feature>
<feature type="site" description="Cleavage; by aureolysin" evidence="1">
    <location>
        <begin position="199"/>
        <end position="200"/>
    </location>
</feature>
<feature type="modified residue" description="Pentaglycyl murein peptidoglycan amidated threonine" evidence="3">
    <location>
        <position position="871"/>
    </location>
</feature>
<sequence>MKKRIDYLSNKQNKYSIRRFTVGTTSVIVGATILFGIGNHQAQASEQSNDTTQSSKNNASADSEKNNMIETPQLNTTANDTSDISANTNSANVDSTAKPMSTQTSNTTTTEPASTNETPQLTAIKDQATAAKMQDQTVPQEANSQVDNKTTNDANSIATNSELKNPQTLDLPQSSPQTISNAQGTSKPSVRTRAVRSLAVAEPVVNAADAKGTNVNDKVTAKDFQLEKTTFDPNQSGNTFMAANFTVTGQVKSGDYFTAKLPDSVTGNGDVDYSNSNNTMPIADIVNDKNEVVAKATYDILTKTYTFVFTDYVNDKQNINGKFSLPLFTDRAKAPKSGTYDANINIADEMFNNKITYNYSSPIAGIDKPNGANISSQIIGVDTASGQNTYKQTVFVNPKQRVLGNTWVYIKGYQDKIEESSGKVSATDTKLRIFEVNDTSKLSDSYYADPNDSNLKEVTDQFKDKITYKYQNVASINFGDINKTYVVLVEGHYDKTGKNLKTQVIQENVDPATGKDYSIFGWNNENVVRYGGGSADGDSAVNPKDPTPGPPVDPEPSPDPEPEPSPDPDPEPTPDPEPSPDPDPDSDSDSDSGSDSDSDSDSDSDSDSDSGSDSDSDSDSDSESDSESDSDSDSESDSDSDSDSESDSDSDSDSDSDSDSDSDSDSDSDSDSDSDSDSDSDSESDSDSDSDSESDSDSDSDSDSDSDSDSDSDSDSDSDSDSDSDSDSESDSDSDSDSDSDSDSDSDSDSDSDSDSDSDSDSDSDSESDSDSDSDSDSDSDSDSDSDSDSDSDSDSDSDSDSESDSDSDSDSDSDSDSDSDSDSDSDSDSDSDSRVTPPNNEQKAPSNPKGEVNHSNKVSKQHKTDALPETGDKSENTNATLFGAMMALLGSLLLFRKRKQDHKEKA</sequence>
<comment type="function">
    <text evidence="1">Cell surface-associated protein implicated in virulence by promoting bacterial attachment to both alpha- and beta-chains of human fibrinogen and inducing the formation of bacterial clumps.</text>
</comment>
<comment type="subcellular location">
    <subcellularLocation>
        <location evidence="3">Secreted</location>
        <location evidence="3">Cell wall</location>
        <topology evidence="3">Peptidoglycan-anchor</topology>
    </subcellularLocation>
    <text evidence="2">Anchored to the cell wall by sortase A (By similarity).</text>
</comment>
<comment type="domain">
    <text evidence="1">The Asp/Ser-rich domain functions as a stalk to allow the ligand binding domain to be displayed in a functional form on the cell surface.</text>
</comment>
<comment type="PTM">
    <text evidence="1">Proteolytically cleaved by aureolysin (aur). This cleavage leads to the inactivation of ClfB (By similarity).</text>
</comment>
<comment type="similarity">
    <text evidence="5">Belongs to the serine-aspartate repeat-containing protein (SDr) family.</text>
</comment>
<dbReference type="EMBL" id="BA000033">
    <property type="protein sequence ID" value="BAB96416.1"/>
    <property type="molecule type" value="Genomic_DNA"/>
</dbReference>
<dbReference type="RefSeq" id="WP_000745817.1">
    <property type="nucleotide sequence ID" value="NC_003923.1"/>
</dbReference>
<dbReference type="SMR" id="Q8NUL0"/>
<dbReference type="KEGG" id="sam:MW2551"/>
<dbReference type="HOGENOM" id="CLU_004137_2_0_9"/>
<dbReference type="PRO" id="PR:Q8NUL0"/>
<dbReference type="GO" id="GO:0005576">
    <property type="term" value="C:extracellular region"/>
    <property type="evidence" value="ECO:0007669"/>
    <property type="project" value="UniProtKB-KW"/>
</dbReference>
<dbReference type="GO" id="GO:0007155">
    <property type="term" value="P:cell adhesion"/>
    <property type="evidence" value="ECO:0007669"/>
    <property type="project" value="InterPro"/>
</dbReference>
<dbReference type="Gene3D" id="2.60.40.1280">
    <property type="match status" value="1"/>
</dbReference>
<dbReference type="Gene3D" id="2.60.40.1290">
    <property type="match status" value="1"/>
</dbReference>
<dbReference type="InterPro" id="IPR011266">
    <property type="entry name" value="Adhesin_Fg-bd_dom_2"/>
</dbReference>
<dbReference type="InterPro" id="IPR008966">
    <property type="entry name" value="Adhesion_dom_sf"/>
</dbReference>
<dbReference type="InterPro" id="IPR011252">
    <property type="entry name" value="Fibrogen-bd_dom1"/>
</dbReference>
<dbReference type="InterPro" id="IPR019931">
    <property type="entry name" value="LPXTG_anchor"/>
</dbReference>
<dbReference type="InterPro" id="IPR050972">
    <property type="entry name" value="SDr-like"/>
</dbReference>
<dbReference type="InterPro" id="IPR041171">
    <property type="entry name" value="SDR_Ig"/>
</dbReference>
<dbReference type="InterPro" id="IPR005877">
    <property type="entry name" value="YSIRK_signal_dom"/>
</dbReference>
<dbReference type="NCBIfam" id="TIGR01167">
    <property type="entry name" value="LPXTG_anchor"/>
    <property type="match status" value="1"/>
</dbReference>
<dbReference type="NCBIfam" id="NF033845">
    <property type="entry name" value="MSCRAMM_ClfB"/>
    <property type="match status" value="1"/>
</dbReference>
<dbReference type="NCBIfam" id="TIGR01168">
    <property type="entry name" value="YSIRK_signal"/>
    <property type="match status" value="1"/>
</dbReference>
<dbReference type="PANTHER" id="PTHR34403">
    <property type="entry name" value="TOL-PAL SYSTEM PROTEIN TOLA"/>
    <property type="match status" value="1"/>
</dbReference>
<dbReference type="PANTHER" id="PTHR34403:SF8">
    <property type="entry name" value="TOL-PAL SYSTEM PROTEIN TOLA"/>
    <property type="match status" value="1"/>
</dbReference>
<dbReference type="Pfam" id="PF17961">
    <property type="entry name" value="Big_8"/>
    <property type="match status" value="1"/>
</dbReference>
<dbReference type="Pfam" id="PF00746">
    <property type="entry name" value="Gram_pos_anchor"/>
    <property type="match status" value="1"/>
</dbReference>
<dbReference type="Pfam" id="PF10425">
    <property type="entry name" value="SdrG_C_C"/>
    <property type="match status" value="1"/>
</dbReference>
<dbReference type="Pfam" id="PF04650">
    <property type="entry name" value="YSIRK_signal"/>
    <property type="match status" value="1"/>
</dbReference>
<dbReference type="SUPFAM" id="SSF49401">
    <property type="entry name" value="Bacterial adhesins"/>
    <property type="match status" value="2"/>
</dbReference>
<dbReference type="PROSITE" id="PS50847">
    <property type="entry name" value="GRAM_POS_ANCHORING"/>
    <property type="match status" value="1"/>
</dbReference>
<accession>Q8NUL0</accession>
<evidence type="ECO:0000250" key="1"/>
<evidence type="ECO:0000250" key="2">
    <source>
        <dbReference type="UniProtKB" id="Q2FUY2"/>
    </source>
</evidence>
<evidence type="ECO:0000255" key="3">
    <source>
        <dbReference type="PROSITE-ProRule" id="PRU00477"/>
    </source>
</evidence>
<evidence type="ECO:0000256" key="4">
    <source>
        <dbReference type="SAM" id="MobiDB-lite"/>
    </source>
</evidence>
<evidence type="ECO:0000305" key="5"/>
<keyword id="KW-0134">Cell wall</keyword>
<keyword id="KW-0572">Peptidoglycan-anchor</keyword>
<keyword id="KW-0964">Secreted</keyword>
<keyword id="KW-0732">Signal</keyword>
<keyword id="KW-0843">Virulence</keyword>
<reference key="1">
    <citation type="journal article" date="2002" name="Lancet">
        <title>Genome and virulence determinants of high virulence community-acquired MRSA.</title>
        <authorList>
            <person name="Baba T."/>
            <person name="Takeuchi F."/>
            <person name="Kuroda M."/>
            <person name="Yuzawa H."/>
            <person name="Aoki K."/>
            <person name="Oguchi A."/>
            <person name="Nagai Y."/>
            <person name="Iwama N."/>
            <person name="Asano K."/>
            <person name="Naimi T."/>
            <person name="Kuroda H."/>
            <person name="Cui L."/>
            <person name="Yamamoto K."/>
            <person name="Hiramatsu K."/>
        </authorList>
    </citation>
    <scope>NUCLEOTIDE SEQUENCE [LARGE SCALE GENOMIC DNA]</scope>
    <source>
        <strain>MW2</strain>
    </source>
</reference>
<proteinExistence type="inferred from homology"/>
<organism>
    <name type="scientific">Staphylococcus aureus (strain MW2)</name>
    <dbReference type="NCBI Taxonomy" id="196620"/>
    <lineage>
        <taxon>Bacteria</taxon>
        <taxon>Bacillati</taxon>
        <taxon>Bacillota</taxon>
        <taxon>Bacilli</taxon>
        <taxon>Bacillales</taxon>
        <taxon>Staphylococcaceae</taxon>
        <taxon>Staphylococcus</taxon>
    </lineage>
</organism>